<organism>
    <name type="scientific">Staphylococcus aureus (strain COL)</name>
    <dbReference type="NCBI Taxonomy" id="93062"/>
    <lineage>
        <taxon>Bacteria</taxon>
        <taxon>Bacillati</taxon>
        <taxon>Bacillota</taxon>
        <taxon>Bacilli</taxon>
        <taxon>Bacillales</taxon>
        <taxon>Staphylococcaceae</taxon>
        <taxon>Staphylococcus</taxon>
    </lineage>
</organism>
<reference key="1">
    <citation type="journal article" date="2005" name="J. Bacteriol.">
        <title>Insights on evolution of virulence and resistance from the complete genome analysis of an early methicillin-resistant Staphylococcus aureus strain and a biofilm-producing methicillin-resistant Staphylococcus epidermidis strain.</title>
        <authorList>
            <person name="Gill S.R."/>
            <person name="Fouts D.E."/>
            <person name="Archer G.L."/>
            <person name="Mongodin E.F."/>
            <person name="DeBoy R.T."/>
            <person name="Ravel J."/>
            <person name="Paulsen I.T."/>
            <person name="Kolonay J.F."/>
            <person name="Brinkac L.M."/>
            <person name="Beanan M.J."/>
            <person name="Dodson R.J."/>
            <person name="Daugherty S.C."/>
            <person name="Madupu R."/>
            <person name="Angiuoli S.V."/>
            <person name="Durkin A.S."/>
            <person name="Haft D.H."/>
            <person name="Vamathevan J.J."/>
            <person name="Khouri H."/>
            <person name="Utterback T.R."/>
            <person name="Lee C."/>
            <person name="Dimitrov G."/>
            <person name="Jiang L."/>
            <person name="Qin H."/>
            <person name="Weidman J."/>
            <person name="Tran K."/>
            <person name="Kang K.H."/>
            <person name="Hance I.R."/>
            <person name="Nelson K.E."/>
            <person name="Fraser C.M."/>
        </authorList>
    </citation>
    <scope>NUCLEOTIDE SEQUENCE [LARGE SCALE GENOMIC DNA]</scope>
    <source>
        <strain>COL</strain>
    </source>
</reference>
<gene>
    <name evidence="1" type="primary">tyrS</name>
    <name type="ordered locus">SACOL1778</name>
</gene>
<evidence type="ECO:0000255" key="1">
    <source>
        <dbReference type="HAMAP-Rule" id="MF_02006"/>
    </source>
</evidence>
<feature type="chain" id="PRO_0000234773" description="Tyrosine--tRNA ligase">
    <location>
        <begin position="1"/>
        <end position="420"/>
    </location>
</feature>
<feature type="domain" description="S4 RNA-binding" evidence="1">
    <location>
        <begin position="353"/>
        <end position="420"/>
    </location>
</feature>
<feature type="short sequence motif" description="'HIGH' region">
    <location>
        <begin position="41"/>
        <end position="50"/>
    </location>
</feature>
<feature type="short sequence motif" description="'KMSKS' region">
    <location>
        <begin position="231"/>
        <end position="235"/>
    </location>
</feature>
<feature type="binding site" evidence="1">
    <location>
        <position position="36"/>
    </location>
    <ligand>
        <name>L-tyrosine</name>
        <dbReference type="ChEBI" id="CHEBI:58315"/>
    </ligand>
</feature>
<feature type="binding site" evidence="1">
    <location>
        <position position="170"/>
    </location>
    <ligand>
        <name>L-tyrosine</name>
        <dbReference type="ChEBI" id="CHEBI:58315"/>
    </ligand>
</feature>
<feature type="binding site" evidence="1">
    <location>
        <position position="174"/>
    </location>
    <ligand>
        <name>L-tyrosine</name>
        <dbReference type="ChEBI" id="CHEBI:58315"/>
    </ligand>
</feature>
<feature type="binding site" evidence="1">
    <location>
        <position position="234"/>
    </location>
    <ligand>
        <name>ATP</name>
        <dbReference type="ChEBI" id="CHEBI:30616"/>
    </ligand>
</feature>
<name>SYY_STAAC</name>
<keyword id="KW-0030">Aminoacyl-tRNA synthetase</keyword>
<keyword id="KW-0067">ATP-binding</keyword>
<keyword id="KW-0963">Cytoplasm</keyword>
<keyword id="KW-0436">Ligase</keyword>
<keyword id="KW-0547">Nucleotide-binding</keyword>
<keyword id="KW-0648">Protein biosynthesis</keyword>
<keyword id="KW-0694">RNA-binding</keyword>
<sequence>MTNVLIEDLKWRGLIYQQTDEQGIEDLLNKEQVTLYCGADPTADSLHIGHLLPFLTLRRFQEHGHRPIVLIGGGTGMIGDPSGKSEERVLQTEEQVDKNIEGISKQIHNIFEFGTDHGAVLVNNRDWLGQISLISFLRDYGKHVGVNYMLGKDSIQSRLEHGISYTEFTYTILQAIDFGHLNRELNCKIQVGGSDQWGNITSGIELMRRMYGQTDAYGLTIPLVTKSDGKKFGKSESGAVWLDAEKTSPYEFYQFWINQSDEDVIKFLKYFTFLGKEEIDRLEQSKNEAPHLREAQKTLAEEVTKFIHGEDALNDAIRISQALFSGDLKSLSAKELKDGFKDVPQVTLSNDTTNIVEVLIETGISPSKRQAREDVNNGAIYINGERQQDVNYALAPEDKIDGEFTIIRRGKKKYFMVNYQ</sequence>
<proteinExistence type="inferred from homology"/>
<accession>Q5HF45</accession>
<comment type="function">
    <text evidence="1">Catalyzes the attachment of tyrosine to tRNA(Tyr) in a two-step reaction: tyrosine is first activated by ATP to form Tyr-AMP and then transferred to the acceptor end of tRNA(Tyr).</text>
</comment>
<comment type="catalytic activity">
    <reaction evidence="1">
        <text>tRNA(Tyr) + L-tyrosine + ATP = L-tyrosyl-tRNA(Tyr) + AMP + diphosphate + H(+)</text>
        <dbReference type="Rhea" id="RHEA:10220"/>
        <dbReference type="Rhea" id="RHEA-COMP:9706"/>
        <dbReference type="Rhea" id="RHEA-COMP:9707"/>
        <dbReference type="ChEBI" id="CHEBI:15378"/>
        <dbReference type="ChEBI" id="CHEBI:30616"/>
        <dbReference type="ChEBI" id="CHEBI:33019"/>
        <dbReference type="ChEBI" id="CHEBI:58315"/>
        <dbReference type="ChEBI" id="CHEBI:78442"/>
        <dbReference type="ChEBI" id="CHEBI:78536"/>
        <dbReference type="ChEBI" id="CHEBI:456215"/>
        <dbReference type="EC" id="6.1.1.1"/>
    </reaction>
</comment>
<comment type="subunit">
    <text evidence="1">Homodimer.</text>
</comment>
<comment type="subcellular location">
    <subcellularLocation>
        <location evidence="1">Cytoplasm</location>
    </subcellularLocation>
</comment>
<comment type="similarity">
    <text evidence="1">Belongs to the class-I aminoacyl-tRNA synthetase family. TyrS type 1 subfamily.</text>
</comment>
<dbReference type="EC" id="6.1.1.1" evidence="1"/>
<dbReference type="EMBL" id="CP000046">
    <property type="protein sequence ID" value="AAW38307.1"/>
    <property type="molecule type" value="Genomic_DNA"/>
</dbReference>
<dbReference type="RefSeq" id="WP_000186026.1">
    <property type="nucleotide sequence ID" value="NC_002951.2"/>
</dbReference>
<dbReference type="SMR" id="Q5HF45"/>
<dbReference type="KEGG" id="sac:SACOL1778"/>
<dbReference type="HOGENOM" id="CLU_024003_0_3_9"/>
<dbReference type="Proteomes" id="UP000000530">
    <property type="component" value="Chromosome"/>
</dbReference>
<dbReference type="GO" id="GO:0005829">
    <property type="term" value="C:cytosol"/>
    <property type="evidence" value="ECO:0007669"/>
    <property type="project" value="TreeGrafter"/>
</dbReference>
<dbReference type="GO" id="GO:0005524">
    <property type="term" value="F:ATP binding"/>
    <property type="evidence" value="ECO:0007669"/>
    <property type="project" value="UniProtKB-UniRule"/>
</dbReference>
<dbReference type="GO" id="GO:0003723">
    <property type="term" value="F:RNA binding"/>
    <property type="evidence" value="ECO:0007669"/>
    <property type="project" value="UniProtKB-KW"/>
</dbReference>
<dbReference type="GO" id="GO:0004831">
    <property type="term" value="F:tyrosine-tRNA ligase activity"/>
    <property type="evidence" value="ECO:0007669"/>
    <property type="project" value="UniProtKB-UniRule"/>
</dbReference>
<dbReference type="GO" id="GO:0006437">
    <property type="term" value="P:tyrosyl-tRNA aminoacylation"/>
    <property type="evidence" value="ECO:0007669"/>
    <property type="project" value="UniProtKB-UniRule"/>
</dbReference>
<dbReference type="CDD" id="cd00165">
    <property type="entry name" value="S4"/>
    <property type="match status" value="1"/>
</dbReference>
<dbReference type="CDD" id="cd00395">
    <property type="entry name" value="Tyr_Trp_RS_core"/>
    <property type="match status" value="1"/>
</dbReference>
<dbReference type="FunFam" id="1.10.240.10:FF:000001">
    <property type="entry name" value="Tyrosine--tRNA ligase"/>
    <property type="match status" value="1"/>
</dbReference>
<dbReference type="FunFam" id="3.10.290.10:FF:000012">
    <property type="entry name" value="Tyrosine--tRNA ligase"/>
    <property type="match status" value="1"/>
</dbReference>
<dbReference type="FunFam" id="3.40.50.620:FF:000008">
    <property type="entry name" value="Tyrosine--tRNA ligase"/>
    <property type="match status" value="1"/>
</dbReference>
<dbReference type="Gene3D" id="3.40.50.620">
    <property type="entry name" value="HUPs"/>
    <property type="match status" value="1"/>
</dbReference>
<dbReference type="Gene3D" id="3.10.290.10">
    <property type="entry name" value="RNA-binding S4 domain"/>
    <property type="match status" value="1"/>
</dbReference>
<dbReference type="Gene3D" id="1.10.240.10">
    <property type="entry name" value="Tyrosyl-Transfer RNA Synthetase"/>
    <property type="match status" value="1"/>
</dbReference>
<dbReference type="HAMAP" id="MF_02006">
    <property type="entry name" value="Tyr_tRNA_synth_type1"/>
    <property type="match status" value="1"/>
</dbReference>
<dbReference type="InterPro" id="IPR001412">
    <property type="entry name" value="aa-tRNA-synth_I_CS"/>
</dbReference>
<dbReference type="InterPro" id="IPR002305">
    <property type="entry name" value="aa-tRNA-synth_Ic"/>
</dbReference>
<dbReference type="InterPro" id="IPR014729">
    <property type="entry name" value="Rossmann-like_a/b/a_fold"/>
</dbReference>
<dbReference type="InterPro" id="IPR002942">
    <property type="entry name" value="S4_RNA-bd"/>
</dbReference>
<dbReference type="InterPro" id="IPR036986">
    <property type="entry name" value="S4_RNA-bd_sf"/>
</dbReference>
<dbReference type="InterPro" id="IPR054608">
    <property type="entry name" value="SYY-like_C"/>
</dbReference>
<dbReference type="InterPro" id="IPR002307">
    <property type="entry name" value="Tyr-tRNA-ligase"/>
</dbReference>
<dbReference type="InterPro" id="IPR024088">
    <property type="entry name" value="Tyr-tRNA-ligase_bac-type"/>
</dbReference>
<dbReference type="InterPro" id="IPR024107">
    <property type="entry name" value="Tyr-tRNA-ligase_bac_1"/>
</dbReference>
<dbReference type="NCBIfam" id="TIGR00234">
    <property type="entry name" value="tyrS"/>
    <property type="match status" value="1"/>
</dbReference>
<dbReference type="PANTHER" id="PTHR11766:SF0">
    <property type="entry name" value="TYROSINE--TRNA LIGASE, MITOCHONDRIAL"/>
    <property type="match status" value="1"/>
</dbReference>
<dbReference type="PANTHER" id="PTHR11766">
    <property type="entry name" value="TYROSYL-TRNA SYNTHETASE"/>
    <property type="match status" value="1"/>
</dbReference>
<dbReference type="Pfam" id="PF22421">
    <property type="entry name" value="SYY_C-terminal"/>
    <property type="match status" value="1"/>
</dbReference>
<dbReference type="Pfam" id="PF00579">
    <property type="entry name" value="tRNA-synt_1b"/>
    <property type="match status" value="1"/>
</dbReference>
<dbReference type="PRINTS" id="PR01040">
    <property type="entry name" value="TRNASYNTHTYR"/>
</dbReference>
<dbReference type="SMART" id="SM00363">
    <property type="entry name" value="S4"/>
    <property type="match status" value="1"/>
</dbReference>
<dbReference type="SUPFAM" id="SSF55174">
    <property type="entry name" value="Alpha-L RNA-binding motif"/>
    <property type="match status" value="1"/>
</dbReference>
<dbReference type="SUPFAM" id="SSF52374">
    <property type="entry name" value="Nucleotidylyl transferase"/>
    <property type="match status" value="1"/>
</dbReference>
<dbReference type="PROSITE" id="PS00178">
    <property type="entry name" value="AA_TRNA_LIGASE_I"/>
    <property type="match status" value="1"/>
</dbReference>
<dbReference type="PROSITE" id="PS50889">
    <property type="entry name" value="S4"/>
    <property type="match status" value="1"/>
</dbReference>
<protein>
    <recommendedName>
        <fullName evidence="1">Tyrosine--tRNA ligase</fullName>
        <ecNumber evidence="1">6.1.1.1</ecNumber>
    </recommendedName>
    <alternativeName>
        <fullName evidence="1">Tyrosyl-tRNA synthetase</fullName>
        <shortName evidence="1">TyrRS</shortName>
    </alternativeName>
</protein>